<dbReference type="EC" id="3.5.4.16" evidence="1"/>
<dbReference type="EMBL" id="CP000941">
    <property type="protein sequence ID" value="ACA11907.1"/>
    <property type="status" value="ALT_INIT"/>
    <property type="molecule type" value="Genomic_DNA"/>
</dbReference>
<dbReference type="SMR" id="B0U741"/>
<dbReference type="KEGG" id="xfm:Xfasm12_0929"/>
<dbReference type="HOGENOM" id="CLU_062816_0_0_6"/>
<dbReference type="UniPathway" id="UPA00848">
    <property type="reaction ID" value="UER00151"/>
</dbReference>
<dbReference type="GO" id="GO:0003934">
    <property type="term" value="F:GTP cyclohydrolase I activity"/>
    <property type="evidence" value="ECO:0007669"/>
    <property type="project" value="UniProtKB-UniRule"/>
</dbReference>
<dbReference type="GO" id="GO:0046654">
    <property type="term" value="P:tetrahydrofolate biosynthetic process"/>
    <property type="evidence" value="ECO:0007669"/>
    <property type="project" value="UniProtKB-UniRule"/>
</dbReference>
<dbReference type="Gene3D" id="3.10.270.10">
    <property type="entry name" value="Urate Oxidase"/>
    <property type="match status" value="1"/>
</dbReference>
<dbReference type="HAMAP" id="MF_01527_B">
    <property type="entry name" value="GTP_cyclohydrol_B"/>
    <property type="match status" value="1"/>
</dbReference>
<dbReference type="InterPro" id="IPR022838">
    <property type="entry name" value="GTP_cyclohydrolase_FolE2"/>
</dbReference>
<dbReference type="InterPro" id="IPR003801">
    <property type="entry name" value="GTP_cyclohydrolase_FolE2/MptA"/>
</dbReference>
<dbReference type="NCBIfam" id="NF010200">
    <property type="entry name" value="PRK13674.1-1"/>
    <property type="match status" value="1"/>
</dbReference>
<dbReference type="PANTHER" id="PTHR36445">
    <property type="entry name" value="GTP CYCLOHYDROLASE MPTA"/>
    <property type="match status" value="1"/>
</dbReference>
<dbReference type="PANTHER" id="PTHR36445:SF1">
    <property type="entry name" value="GTP CYCLOHYDROLASE MPTA"/>
    <property type="match status" value="1"/>
</dbReference>
<dbReference type="Pfam" id="PF02649">
    <property type="entry name" value="GCHY-1"/>
    <property type="match status" value="1"/>
</dbReference>
<keyword id="KW-0378">Hydrolase</keyword>
<sequence length="298" mass="32583">MSTSIPDVAVHDSPAIAAPLRWVGMDGIVVPVQLTIADGGQHVIGRARAQIDLPAMEVKGIHMSRLYRLLDTHAVEPLTPVGICGLLSAMVNSHADCASTAARVDWYFDWLRRVPALVSNDLSGWRGYPVWLRAEYSAGHVQFWLCVEVGYSSTCPCSAALARQMLADAFLQEHVEVSALSPETVADWLRSNGSYATPHSQRSLARIEVALTEQAVELGLPALVDCAERILSTPVQAAVRRVDEQAFARLNGANLMYVEDATRRLQHGLAIHYSAFRVHVRHLESLHPHDAVASTADE</sequence>
<evidence type="ECO:0000255" key="1">
    <source>
        <dbReference type="HAMAP-Rule" id="MF_01527"/>
    </source>
</evidence>
<evidence type="ECO:0000305" key="2"/>
<protein>
    <recommendedName>
        <fullName evidence="1">GTP cyclohydrolase FolE2</fullName>
        <ecNumber evidence="1">3.5.4.16</ecNumber>
    </recommendedName>
</protein>
<proteinExistence type="inferred from homology"/>
<feature type="chain" id="PRO_0000372038" description="GTP cyclohydrolase FolE2">
    <location>
        <begin position="1"/>
        <end position="298"/>
    </location>
</feature>
<feature type="site" description="May be catalytically important" evidence="1">
    <location>
        <position position="155"/>
    </location>
</feature>
<comment type="function">
    <text evidence="1">Converts GTP to 7,8-dihydroneopterin triphosphate.</text>
</comment>
<comment type="catalytic activity">
    <reaction evidence="1">
        <text>GTP + H2O = 7,8-dihydroneopterin 3'-triphosphate + formate + H(+)</text>
        <dbReference type="Rhea" id="RHEA:17473"/>
        <dbReference type="ChEBI" id="CHEBI:15377"/>
        <dbReference type="ChEBI" id="CHEBI:15378"/>
        <dbReference type="ChEBI" id="CHEBI:15740"/>
        <dbReference type="ChEBI" id="CHEBI:37565"/>
        <dbReference type="ChEBI" id="CHEBI:58462"/>
        <dbReference type="EC" id="3.5.4.16"/>
    </reaction>
</comment>
<comment type="pathway">
    <text evidence="1">Cofactor biosynthesis; 7,8-dihydroneopterin triphosphate biosynthesis; 7,8-dihydroneopterin triphosphate from GTP: step 1/1.</text>
</comment>
<comment type="similarity">
    <text evidence="1">Belongs to the GTP cyclohydrolase IV family.</text>
</comment>
<comment type="sequence caution" evidence="2">
    <conflict type="erroneous initiation">
        <sequence resource="EMBL-CDS" id="ACA11907"/>
    </conflict>
</comment>
<gene>
    <name evidence="1" type="primary">folE2</name>
    <name type="ordered locus">Xfasm12_0929</name>
</gene>
<organism>
    <name type="scientific">Xylella fastidiosa (strain M12)</name>
    <dbReference type="NCBI Taxonomy" id="405440"/>
    <lineage>
        <taxon>Bacteria</taxon>
        <taxon>Pseudomonadati</taxon>
        <taxon>Pseudomonadota</taxon>
        <taxon>Gammaproteobacteria</taxon>
        <taxon>Lysobacterales</taxon>
        <taxon>Lysobacteraceae</taxon>
        <taxon>Xylella</taxon>
    </lineage>
</organism>
<reference key="1">
    <citation type="journal article" date="2010" name="J. Bacteriol.">
        <title>Whole genome sequences of two Xylella fastidiosa strains (M12 and M23) causing almond leaf scorch disease in California.</title>
        <authorList>
            <person name="Chen J."/>
            <person name="Xie G."/>
            <person name="Han S."/>
            <person name="Chertkov O."/>
            <person name="Sims D."/>
            <person name="Civerolo E.L."/>
        </authorList>
    </citation>
    <scope>NUCLEOTIDE SEQUENCE [LARGE SCALE GENOMIC DNA]</scope>
    <source>
        <strain>M12</strain>
    </source>
</reference>
<accession>B0U741</accession>
<name>GCH4_XYLFM</name>